<protein>
    <recommendedName>
        <fullName evidence="6">Large ribosomal subunit protein uL3m</fullName>
    </recommendedName>
    <alternativeName>
        <fullName>39S ribosomal protein L3, mitochondrial</fullName>
        <shortName>L3mt</shortName>
        <shortName>MRP-L3</shortName>
    </alternativeName>
</protein>
<accession>P09001</accession>
<accession>Q6IBT2</accession>
<reference key="1">
    <citation type="journal article" date="1987" name="Nucleic Acids Res.">
        <title>Cloning and characterization of a human ribosomal protein gene with enhanced expression in fetal and neoplastic cells.</title>
        <authorList>
            <person name="Ou J.-H."/>
            <person name="Yen T.S.B."/>
            <person name="Wang Y.-F."/>
            <person name="Kam W.K."/>
            <person name="Rutter W."/>
        </authorList>
    </citation>
    <scope>NUCLEOTIDE SEQUENCE [MRNA]</scope>
</reference>
<reference key="2">
    <citation type="submission" date="2004-06" db="EMBL/GenBank/DDBJ databases">
        <title>Cloning of human full open reading frames in Gateway(TM) system entry vector (pDONR201).</title>
        <authorList>
            <person name="Ebert L."/>
            <person name="Schick M."/>
            <person name="Neubert P."/>
            <person name="Schatten R."/>
            <person name="Henze S."/>
            <person name="Korn B."/>
        </authorList>
    </citation>
    <scope>NUCLEOTIDE SEQUENCE [LARGE SCALE MRNA]</scope>
</reference>
<reference key="3">
    <citation type="submission" date="2005-09" db="EMBL/GenBank/DDBJ databases">
        <authorList>
            <person name="Mural R.J."/>
            <person name="Istrail S."/>
            <person name="Sutton G.G."/>
            <person name="Florea L."/>
            <person name="Halpern A.L."/>
            <person name="Mobarry C.M."/>
            <person name="Lippert R."/>
            <person name="Walenz B."/>
            <person name="Shatkay H."/>
            <person name="Dew I."/>
            <person name="Miller J.R."/>
            <person name="Flanigan M.J."/>
            <person name="Edwards N.J."/>
            <person name="Bolanos R."/>
            <person name="Fasulo D."/>
            <person name="Halldorsson B.V."/>
            <person name="Hannenhalli S."/>
            <person name="Turner R."/>
            <person name="Yooseph S."/>
            <person name="Lu F."/>
            <person name="Nusskern D.R."/>
            <person name="Shue B.C."/>
            <person name="Zheng X.H."/>
            <person name="Zhong F."/>
            <person name="Delcher A.L."/>
            <person name="Huson D.H."/>
            <person name="Kravitz S.A."/>
            <person name="Mouchard L."/>
            <person name="Reinert K."/>
            <person name="Remington K.A."/>
            <person name="Clark A.G."/>
            <person name="Waterman M.S."/>
            <person name="Eichler E.E."/>
            <person name="Adams M.D."/>
            <person name="Hunkapiller M.W."/>
            <person name="Myers E.W."/>
            <person name="Venter J.C."/>
        </authorList>
    </citation>
    <scope>NUCLEOTIDE SEQUENCE [LARGE SCALE GENOMIC DNA]</scope>
</reference>
<reference key="4">
    <citation type="journal article" date="2004" name="Genome Res.">
        <title>The status, quality, and expansion of the NIH full-length cDNA project: the Mammalian Gene Collection (MGC).</title>
        <authorList>
            <consortium name="The MGC Project Team"/>
        </authorList>
    </citation>
    <scope>NUCLEOTIDE SEQUENCE [LARGE SCALE MRNA]</scope>
    <source>
        <tissue>Cervix</tissue>
    </source>
</reference>
<reference key="5">
    <citation type="journal article" date="2011" name="BMC Syst. Biol.">
        <title>Initial characterization of the human central proteome.</title>
        <authorList>
            <person name="Burkard T.R."/>
            <person name="Planyavsky M."/>
            <person name="Kaupe I."/>
            <person name="Breitwieser F.P."/>
            <person name="Buerckstuemmer T."/>
            <person name="Bennett K.L."/>
            <person name="Superti-Furga G."/>
            <person name="Colinge J."/>
        </authorList>
    </citation>
    <scope>IDENTIFICATION BY MASS SPECTROMETRY [LARGE SCALE ANALYSIS]</scope>
</reference>
<reference key="6">
    <citation type="journal article" date="2015" name="Proteomics">
        <title>N-terminome analysis of the human mitochondrial proteome.</title>
        <authorList>
            <person name="Vaca Jacome A.S."/>
            <person name="Rabilloud T."/>
            <person name="Schaeffer-Reiss C."/>
            <person name="Rompais M."/>
            <person name="Ayoub D."/>
            <person name="Lane L."/>
            <person name="Bairoch A."/>
            <person name="Van Dorsselaer A."/>
            <person name="Carapito C."/>
        </authorList>
    </citation>
    <scope>CLEAVAGE OF TRANSIT PEPTIDE [LARGE SCALE ANALYSIS] AFTER GLY-40</scope>
    <scope>IDENTIFICATION BY MASS SPECTROMETRY [LARGE SCALE ANALYSIS]</scope>
</reference>
<reference evidence="8" key="7">
    <citation type="journal article" date="2014" name="Science">
        <title>Structure of the large ribosomal subunit from human mitochondria.</title>
        <authorList>
            <person name="Brown A."/>
            <person name="Amunts A."/>
            <person name="Bai X.C."/>
            <person name="Sugimoto Y."/>
            <person name="Edwards P.C."/>
            <person name="Murshudov G."/>
            <person name="Scheres S.H."/>
            <person name="Ramakrishnan V."/>
        </authorList>
    </citation>
    <scope>STRUCTURE BY ELECTRON MICROSCOPY (3.40 ANGSTROMS)</scope>
    <scope>SUBCELLULAR LOCATION</scope>
    <scope>SUBUNIT</scope>
</reference>
<reference evidence="9" key="8">
    <citation type="journal article" date="2015" name="Science">
        <title>Ribosome. The structure of the human mitochondrial ribosome.</title>
        <authorList>
            <person name="Amunts A."/>
            <person name="Brown A."/>
            <person name="Toots J."/>
            <person name="Scheres S.H."/>
            <person name="Ramakrishnan V."/>
        </authorList>
    </citation>
    <scope>STRUCTURE BY ELECTRON MICROSCOPY (3.50 ANGSTROMS)</scope>
    <scope>SUBCELLULAR LOCATION</scope>
    <scope>SUBUNIT</scope>
</reference>
<reference evidence="10 11" key="9">
    <citation type="journal article" date="2017" name="Nat. Struct. Mol. Biol.">
        <title>Structures of the human mitochondrial ribosome in native states of assembly.</title>
        <authorList>
            <person name="Brown A."/>
            <person name="Rathore S."/>
            <person name="Kimanius D."/>
            <person name="Aibara S."/>
            <person name="Bai X.C."/>
            <person name="Rorbach J."/>
            <person name="Amunts A."/>
            <person name="Ramakrishnan V."/>
        </authorList>
    </citation>
    <scope>STRUCTURE BY ELECTRON MICROSCOPY (3.03 ANGSTROMS)</scope>
    <scope>SUBCELLULAR LOCATION</scope>
    <scope>SUBUNIT</scope>
</reference>
<reference evidence="12 13" key="10">
    <citation type="journal article" date="2022" name="Nat. Commun.">
        <title>A late-stage assembly checkpoint of the human mitochondrial ribosome large subunit.</title>
        <authorList>
            <person name="Rebelo-Guiomar P."/>
            <person name="Pellegrino S."/>
            <person name="Dent K.C."/>
            <person name="Sas-Chen A."/>
            <person name="Miller-Fleming L."/>
            <person name="Garone C."/>
            <person name="Van Haute L."/>
            <person name="Rogan J.F."/>
            <person name="Dinan A."/>
            <person name="Firth A.E."/>
            <person name="Andrews B."/>
            <person name="Whitworth A.J."/>
            <person name="Schwartz S."/>
            <person name="Warren A.J."/>
            <person name="Minczuk M."/>
        </authorList>
    </citation>
    <scope>STRUCTURE BY ELECTRON MICROSCOPY (2.9 ANGSTROMS) IN COMPLEX WITH MTLSU</scope>
    <scope>SUBUNIT</scope>
</reference>
<reference key="11">
    <citation type="journal article" date="2011" name="Hum. Mutat.">
        <title>Exome sequencing identifies MRPL3 mutation in mitochondrial cardiomyopathy.</title>
        <authorList>
            <person name="Galmiche L."/>
            <person name="Serre V."/>
            <person name="Beinat M."/>
            <person name="Assouline Z."/>
            <person name="Lebre A.S."/>
            <person name="Chretien D."/>
            <person name="Nietschke P."/>
            <person name="Benes V."/>
            <person name="Boddaert N."/>
            <person name="Sidi D."/>
            <person name="Brunelle F."/>
            <person name="Rio M."/>
            <person name="Munnich A."/>
            <person name="Rotig A."/>
        </authorList>
    </citation>
    <scope>VARIANT COXPD9 ARG-317</scope>
</reference>
<gene>
    <name type="primary">MRPL3</name>
    <name type="synonym">MRL3</name>
    <name type="synonym">RPML3</name>
</gene>
<comment type="subunit">
    <text evidence="2 3 4 5">Component of the mitochondrial large ribosomal subunit (mt-LSU) (PubMed:25278503, PubMed:25838379, PubMed:28892042, PubMed:35177605). Mature mammalian 55S mitochondrial ribosomes consist of a small (28S) and a large (39S) subunit. The 28S small subunit contains a 12S ribosomal RNA (12S mt-rRNA) and 30 different proteins. The 39S large subunit contains a 16S rRNA (16S mt-rRNA), a copy of mitochondrial valine transfer RNA (mt-tRNA(Val)), which plays an integral structural role, and 52 different proteins.</text>
</comment>
<comment type="subcellular location">
    <subcellularLocation>
        <location evidence="2 3 4">Mitochondrion</location>
    </subcellularLocation>
</comment>
<comment type="disease" evidence="1">
    <disease id="DI-03428">
        <name>Combined oxidative phosphorylation deficiency 9</name>
        <acronym>COXPD9</acronym>
        <description>A mitochondrial disease characterized by failure to thrive, poor feeding, hypertrophic cardiomyopathy, hepatomegaly, and psychomotor retardation. Death in infancy has been observed in some cases.</description>
        <dbReference type="MIM" id="614582"/>
    </disease>
    <text>The disease is caused by variants affecting the gene represented in this entry.</text>
</comment>
<comment type="similarity">
    <text evidence="7">Belongs to the universal ribosomal protein uL3 family.</text>
</comment>
<feature type="transit peptide" description="Mitochondrion" evidence="14">
    <location>
        <begin position="1"/>
        <end position="40"/>
    </location>
</feature>
<feature type="chain" id="PRO_0000077253" description="Large ribosomal subunit protein uL3m">
    <location>
        <begin position="41"/>
        <end position="348"/>
    </location>
</feature>
<feature type="sequence variant" id="VAR_020108" description="In dbSNP:rs2291381.">
    <original>M</original>
    <variation>T</variation>
    <location>
        <position position="261"/>
    </location>
</feature>
<feature type="sequence variant" id="VAR_066676" description="In COXPD9; dbSNP:rs387906962." evidence="1">
    <original>P</original>
    <variation>R</variation>
    <location>
        <position position="317"/>
    </location>
</feature>
<feature type="turn" evidence="15">
    <location>
        <begin position="49"/>
        <end position="52"/>
    </location>
</feature>
<feature type="helix" evidence="15">
    <location>
        <begin position="57"/>
        <end position="74"/>
    </location>
</feature>
<feature type="helix" evidence="15">
    <location>
        <begin position="79"/>
        <end position="81"/>
    </location>
</feature>
<feature type="strand" evidence="15">
    <location>
        <begin position="99"/>
        <end position="111"/>
    </location>
</feature>
<feature type="strand" evidence="15">
    <location>
        <begin position="116"/>
        <end position="124"/>
    </location>
</feature>
<feature type="strand" evidence="15">
    <location>
        <begin position="126"/>
        <end position="133"/>
    </location>
</feature>
<feature type="turn" evidence="15">
    <location>
        <begin position="136"/>
        <end position="139"/>
    </location>
</feature>
<feature type="strand" evidence="15">
    <location>
        <begin position="140"/>
        <end position="151"/>
    </location>
</feature>
<feature type="helix" evidence="15">
    <location>
        <begin position="154"/>
        <end position="156"/>
    </location>
</feature>
<feature type="helix" evidence="15">
    <location>
        <begin position="159"/>
        <end position="168"/>
    </location>
</feature>
<feature type="strand" evidence="15">
    <location>
        <begin position="173"/>
        <end position="181"/>
    </location>
</feature>
<feature type="helix" evidence="15">
    <location>
        <begin position="183"/>
        <end position="185"/>
    </location>
</feature>
<feature type="strand" evidence="16">
    <location>
        <begin position="189"/>
        <end position="192"/>
    </location>
</feature>
<feature type="helix" evidence="15">
    <location>
        <begin position="195"/>
        <end position="197"/>
    </location>
</feature>
<feature type="strand" evidence="15">
    <location>
        <begin position="203"/>
        <end position="209"/>
    </location>
</feature>
<feature type="strand" evidence="15">
    <location>
        <begin position="214"/>
        <end position="216"/>
    </location>
</feature>
<feature type="helix" evidence="15">
    <location>
        <begin position="218"/>
        <end position="222"/>
    </location>
</feature>
<feature type="turn" evidence="18">
    <location>
        <begin position="230"/>
        <end position="232"/>
    </location>
</feature>
<feature type="strand" evidence="15">
    <location>
        <begin position="237"/>
        <end position="239"/>
    </location>
</feature>
<feature type="strand" evidence="15">
    <location>
        <begin position="246"/>
        <end position="248"/>
    </location>
</feature>
<feature type="strand" evidence="15">
    <location>
        <begin position="258"/>
        <end position="262"/>
    </location>
</feature>
<feature type="strand" evidence="15">
    <location>
        <begin position="264"/>
        <end position="277"/>
    </location>
</feature>
<feature type="turn" evidence="15">
    <location>
        <begin position="278"/>
        <end position="281"/>
    </location>
</feature>
<feature type="strand" evidence="15">
    <location>
        <begin position="282"/>
        <end position="287"/>
    </location>
</feature>
<feature type="strand" evidence="15">
    <location>
        <begin position="296"/>
        <end position="301"/>
    </location>
</feature>
<feature type="helix" evidence="15">
    <location>
        <begin position="305"/>
        <end position="307"/>
    </location>
</feature>
<feature type="strand" evidence="15">
    <location>
        <begin position="312"/>
        <end position="314"/>
    </location>
</feature>
<feature type="helix" evidence="15">
    <location>
        <begin position="321"/>
        <end position="323"/>
    </location>
</feature>
<feature type="strand" evidence="15">
    <location>
        <begin position="330"/>
        <end position="333"/>
    </location>
</feature>
<feature type="strand" evidence="17">
    <location>
        <begin position="335"/>
        <end position="337"/>
    </location>
</feature>
<evidence type="ECO:0000269" key="1">
    <source>
    </source>
</evidence>
<evidence type="ECO:0000269" key="2">
    <source>
    </source>
</evidence>
<evidence type="ECO:0000269" key="3">
    <source>
    </source>
</evidence>
<evidence type="ECO:0000269" key="4">
    <source>
    </source>
</evidence>
<evidence type="ECO:0000269" key="5">
    <source>
    </source>
</evidence>
<evidence type="ECO:0000303" key="6">
    <source>
    </source>
</evidence>
<evidence type="ECO:0000305" key="7"/>
<evidence type="ECO:0007744" key="8">
    <source>
        <dbReference type="PDB" id="3J7Y"/>
    </source>
</evidence>
<evidence type="ECO:0007744" key="9">
    <source>
        <dbReference type="PDB" id="3J9M"/>
    </source>
</evidence>
<evidence type="ECO:0007744" key="10">
    <source>
        <dbReference type="PDB" id="5OOL"/>
    </source>
</evidence>
<evidence type="ECO:0007744" key="11">
    <source>
        <dbReference type="PDB" id="5OOM"/>
    </source>
</evidence>
<evidence type="ECO:0007744" key="12">
    <source>
        <dbReference type="PDB" id="7QH6"/>
    </source>
</evidence>
<evidence type="ECO:0007744" key="13">
    <source>
        <dbReference type="PDB" id="7QH7"/>
    </source>
</evidence>
<evidence type="ECO:0007744" key="14">
    <source>
    </source>
</evidence>
<evidence type="ECO:0007829" key="15">
    <source>
        <dbReference type="PDB" id="7OF0"/>
    </source>
</evidence>
<evidence type="ECO:0007829" key="16">
    <source>
        <dbReference type="PDB" id="7OIA"/>
    </source>
</evidence>
<evidence type="ECO:0007829" key="17">
    <source>
        <dbReference type="PDB" id="7QH6"/>
    </source>
</evidence>
<evidence type="ECO:0007829" key="18">
    <source>
        <dbReference type="PDB" id="7QH7"/>
    </source>
</evidence>
<organism>
    <name type="scientific">Homo sapiens</name>
    <name type="common">Human</name>
    <dbReference type="NCBI Taxonomy" id="9606"/>
    <lineage>
        <taxon>Eukaryota</taxon>
        <taxon>Metazoa</taxon>
        <taxon>Chordata</taxon>
        <taxon>Craniata</taxon>
        <taxon>Vertebrata</taxon>
        <taxon>Euteleostomi</taxon>
        <taxon>Mammalia</taxon>
        <taxon>Eutheria</taxon>
        <taxon>Euarchontoglires</taxon>
        <taxon>Primates</taxon>
        <taxon>Haplorrhini</taxon>
        <taxon>Catarrhini</taxon>
        <taxon>Hominidae</taxon>
        <taxon>Homo</taxon>
    </lineage>
</organism>
<dbReference type="EMBL" id="X06323">
    <property type="protein sequence ID" value="CAA29639.1"/>
    <property type="molecule type" value="mRNA"/>
</dbReference>
<dbReference type="EMBL" id="CR456720">
    <property type="protein sequence ID" value="CAG33001.1"/>
    <property type="molecule type" value="mRNA"/>
</dbReference>
<dbReference type="EMBL" id="CH471052">
    <property type="protein sequence ID" value="EAW79209.1"/>
    <property type="molecule type" value="Genomic_DNA"/>
</dbReference>
<dbReference type="EMBL" id="BC003375">
    <property type="protein sequence ID" value="AAH03375.1"/>
    <property type="molecule type" value="mRNA"/>
</dbReference>
<dbReference type="CCDS" id="CCDS3071.1"/>
<dbReference type="PIR" id="A27294">
    <property type="entry name" value="R5HUL3"/>
</dbReference>
<dbReference type="RefSeq" id="NP_009139.1">
    <property type="nucleotide sequence ID" value="NM_007208.4"/>
</dbReference>
<dbReference type="PDB" id="3J7Y">
    <property type="method" value="EM"/>
    <property type="resolution" value="3.40 A"/>
    <property type="chains" value="E=1-348"/>
</dbReference>
<dbReference type="PDB" id="3J9M">
    <property type="method" value="EM"/>
    <property type="resolution" value="3.50 A"/>
    <property type="chains" value="E=1-348"/>
</dbReference>
<dbReference type="PDB" id="5OOL">
    <property type="method" value="EM"/>
    <property type="resolution" value="3.06 A"/>
    <property type="chains" value="E=1-348"/>
</dbReference>
<dbReference type="PDB" id="5OOM">
    <property type="method" value="EM"/>
    <property type="resolution" value="3.03 A"/>
    <property type="chains" value="E=1-348"/>
</dbReference>
<dbReference type="PDB" id="6I9R">
    <property type="method" value="EM"/>
    <property type="resolution" value="3.90 A"/>
    <property type="chains" value="E=1-348"/>
</dbReference>
<dbReference type="PDB" id="6NU2">
    <property type="method" value="EM"/>
    <property type="resolution" value="3.90 A"/>
    <property type="chains" value="E=45-348"/>
</dbReference>
<dbReference type="PDB" id="6NU3">
    <property type="method" value="EM"/>
    <property type="resolution" value="4.40 A"/>
    <property type="chains" value="E=1-348"/>
</dbReference>
<dbReference type="PDB" id="6VLZ">
    <property type="method" value="EM"/>
    <property type="resolution" value="2.97 A"/>
    <property type="chains" value="E=1-348"/>
</dbReference>
<dbReference type="PDB" id="6VMI">
    <property type="method" value="EM"/>
    <property type="resolution" value="2.96 A"/>
    <property type="chains" value="E=1-348"/>
</dbReference>
<dbReference type="PDB" id="6ZM5">
    <property type="method" value="EM"/>
    <property type="resolution" value="2.89 A"/>
    <property type="chains" value="E=1-348"/>
</dbReference>
<dbReference type="PDB" id="6ZM6">
    <property type="method" value="EM"/>
    <property type="resolution" value="2.59 A"/>
    <property type="chains" value="E=1-348"/>
</dbReference>
<dbReference type="PDB" id="6ZS9">
    <property type="method" value="EM"/>
    <property type="resolution" value="4.00 A"/>
    <property type="chains" value="XE=1-348"/>
</dbReference>
<dbReference type="PDB" id="6ZSA">
    <property type="method" value="EM"/>
    <property type="resolution" value="4.00 A"/>
    <property type="chains" value="XE=1-348"/>
</dbReference>
<dbReference type="PDB" id="6ZSB">
    <property type="method" value="EM"/>
    <property type="resolution" value="4.50 A"/>
    <property type="chains" value="XE=1-348"/>
</dbReference>
<dbReference type="PDB" id="6ZSC">
    <property type="method" value="EM"/>
    <property type="resolution" value="3.50 A"/>
    <property type="chains" value="XE=1-348"/>
</dbReference>
<dbReference type="PDB" id="6ZSD">
    <property type="method" value="EM"/>
    <property type="resolution" value="3.70 A"/>
    <property type="chains" value="XE=1-348"/>
</dbReference>
<dbReference type="PDB" id="6ZSE">
    <property type="method" value="EM"/>
    <property type="resolution" value="5.00 A"/>
    <property type="chains" value="XE=1-348"/>
</dbReference>
<dbReference type="PDB" id="6ZSG">
    <property type="method" value="EM"/>
    <property type="resolution" value="4.00 A"/>
    <property type="chains" value="XE=1-348"/>
</dbReference>
<dbReference type="PDB" id="7A5F">
    <property type="method" value="EM"/>
    <property type="resolution" value="4.40 A"/>
    <property type="chains" value="E3=1-348"/>
</dbReference>
<dbReference type="PDB" id="7A5G">
    <property type="method" value="EM"/>
    <property type="resolution" value="4.33 A"/>
    <property type="chains" value="E3=1-348"/>
</dbReference>
<dbReference type="PDB" id="7A5H">
    <property type="method" value="EM"/>
    <property type="resolution" value="3.30 A"/>
    <property type="chains" value="E=1-348"/>
</dbReference>
<dbReference type="PDB" id="7A5I">
    <property type="method" value="EM"/>
    <property type="resolution" value="3.70 A"/>
    <property type="chains" value="E3=1-348"/>
</dbReference>
<dbReference type="PDB" id="7A5J">
    <property type="method" value="EM"/>
    <property type="resolution" value="3.10 A"/>
    <property type="chains" value="E=1-348"/>
</dbReference>
<dbReference type="PDB" id="7A5K">
    <property type="method" value="EM"/>
    <property type="resolution" value="3.70 A"/>
    <property type="chains" value="E3=1-348"/>
</dbReference>
<dbReference type="PDB" id="7L08">
    <property type="method" value="EM"/>
    <property type="resolution" value="3.49 A"/>
    <property type="chains" value="E=1-348"/>
</dbReference>
<dbReference type="PDB" id="7L20">
    <property type="method" value="EM"/>
    <property type="resolution" value="3.15 A"/>
    <property type="chains" value="E=1-348"/>
</dbReference>
<dbReference type="PDB" id="7O9K">
    <property type="method" value="EM"/>
    <property type="resolution" value="3.10 A"/>
    <property type="chains" value="E=1-348"/>
</dbReference>
<dbReference type="PDB" id="7O9M">
    <property type="method" value="EM"/>
    <property type="resolution" value="2.50 A"/>
    <property type="chains" value="E=1-348"/>
</dbReference>
<dbReference type="PDB" id="7ODR">
    <property type="method" value="EM"/>
    <property type="resolution" value="2.90 A"/>
    <property type="chains" value="E=1-348"/>
</dbReference>
<dbReference type="PDB" id="7ODS">
    <property type="method" value="EM"/>
    <property type="resolution" value="3.10 A"/>
    <property type="chains" value="E=1-348"/>
</dbReference>
<dbReference type="PDB" id="7ODT">
    <property type="method" value="EM"/>
    <property type="resolution" value="3.10 A"/>
    <property type="chains" value="E=1-348"/>
</dbReference>
<dbReference type="PDB" id="7OF0">
    <property type="method" value="EM"/>
    <property type="resolution" value="2.20 A"/>
    <property type="chains" value="E=1-348"/>
</dbReference>
<dbReference type="PDB" id="7OF2">
    <property type="method" value="EM"/>
    <property type="resolution" value="2.70 A"/>
    <property type="chains" value="E=1-348"/>
</dbReference>
<dbReference type="PDB" id="7OF3">
    <property type="method" value="EM"/>
    <property type="resolution" value="2.70 A"/>
    <property type="chains" value="E=1-348"/>
</dbReference>
<dbReference type="PDB" id="7OF4">
    <property type="method" value="EM"/>
    <property type="resolution" value="2.70 A"/>
    <property type="chains" value="E=1-348"/>
</dbReference>
<dbReference type="PDB" id="7OF5">
    <property type="method" value="EM"/>
    <property type="resolution" value="2.90 A"/>
    <property type="chains" value="E=1-348"/>
</dbReference>
<dbReference type="PDB" id="7OF6">
    <property type="method" value="EM"/>
    <property type="resolution" value="2.60 A"/>
    <property type="chains" value="E=1-348"/>
</dbReference>
<dbReference type="PDB" id="7OF7">
    <property type="method" value="EM"/>
    <property type="resolution" value="2.50 A"/>
    <property type="chains" value="E=1-348"/>
</dbReference>
<dbReference type="PDB" id="7OG4">
    <property type="method" value="EM"/>
    <property type="resolution" value="3.80 A"/>
    <property type="chains" value="XE=1-348"/>
</dbReference>
<dbReference type="PDB" id="7OI6">
    <property type="method" value="EM"/>
    <property type="resolution" value="5.70 A"/>
    <property type="chains" value="E=1-348"/>
</dbReference>
<dbReference type="PDB" id="7OI7">
    <property type="method" value="EM"/>
    <property type="resolution" value="3.50 A"/>
    <property type="chains" value="E=1-348"/>
</dbReference>
<dbReference type="PDB" id="7OI8">
    <property type="method" value="EM"/>
    <property type="resolution" value="3.50 A"/>
    <property type="chains" value="E=1-348"/>
</dbReference>
<dbReference type="PDB" id="7OI9">
    <property type="method" value="EM"/>
    <property type="resolution" value="3.30 A"/>
    <property type="chains" value="E=1-348"/>
</dbReference>
<dbReference type="PDB" id="7OIA">
    <property type="method" value="EM"/>
    <property type="resolution" value="3.20 A"/>
    <property type="chains" value="E=1-348"/>
</dbReference>
<dbReference type="PDB" id="7OIB">
    <property type="method" value="EM"/>
    <property type="resolution" value="3.30 A"/>
    <property type="chains" value="E=1-348"/>
</dbReference>
<dbReference type="PDB" id="7OIC">
    <property type="method" value="EM"/>
    <property type="resolution" value="3.10 A"/>
    <property type="chains" value="E=1-348"/>
</dbReference>
<dbReference type="PDB" id="7OID">
    <property type="method" value="EM"/>
    <property type="resolution" value="3.70 A"/>
    <property type="chains" value="E=1-348"/>
</dbReference>
<dbReference type="PDB" id="7OIE">
    <property type="method" value="EM"/>
    <property type="resolution" value="3.50 A"/>
    <property type="chains" value="E=1-348"/>
</dbReference>
<dbReference type="PDB" id="7PD3">
    <property type="method" value="EM"/>
    <property type="resolution" value="3.40 A"/>
    <property type="chains" value="E=1-348"/>
</dbReference>
<dbReference type="PDB" id="7PO4">
    <property type="method" value="EM"/>
    <property type="resolution" value="2.56 A"/>
    <property type="chains" value="E=1-348"/>
</dbReference>
<dbReference type="PDB" id="7QH6">
    <property type="method" value="EM"/>
    <property type="resolution" value="3.08 A"/>
    <property type="chains" value="E=1-348"/>
</dbReference>
<dbReference type="PDB" id="7QH7">
    <property type="method" value="EM"/>
    <property type="resolution" value="2.89 A"/>
    <property type="chains" value="E=45-348"/>
</dbReference>
<dbReference type="PDB" id="7QI4">
    <property type="method" value="EM"/>
    <property type="resolution" value="2.21 A"/>
    <property type="chains" value="E=1-348"/>
</dbReference>
<dbReference type="PDB" id="7QI5">
    <property type="method" value="EM"/>
    <property type="resolution" value="2.63 A"/>
    <property type="chains" value="E=1-348"/>
</dbReference>
<dbReference type="PDB" id="7QI6">
    <property type="method" value="EM"/>
    <property type="resolution" value="2.98 A"/>
    <property type="chains" value="E=1-348"/>
</dbReference>
<dbReference type="PDB" id="8ANY">
    <property type="method" value="EM"/>
    <property type="resolution" value="2.85 A"/>
    <property type="chains" value="E=1-348"/>
</dbReference>
<dbReference type="PDB" id="8K2A">
    <property type="method" value="EM"/>
    <property type="resolution" value="2.90 A"/>
    <property type="chains" value="LC=1-348"/>
</dbReference>
<dbReference type="PDB" id="8K2B">
    <property type="method" value="EM"/>
    <property type="resolution" value="3.40 A"/>
    <property type="chains" value="LC=1-348"/>
</dbReference>
<dbReference type="PDB" id="8OIR">
    <property type="method" value="EM"/>
    <property type="resolution" value="3.10 A"/>
    <property type="chains" value="BM=1-348"/>
</dbReference>
<dbReference type="PDB" id="8OIT">
    <property type="method" value="EM"/>
    <property type="resolution" value="2.90 A"/>
    <property type="chains" value="BM=1-348"/>
</dbReference>
<dbReference type="PDB" id="8PK0">
    <property type="method" value="EM"/>
    <property type="resolution" value="3.03 A"/>
    <property type="chains" value="E=1-348"/>
</dbReference>
<dbReference type="PDB" id="8QSJ">
    <property type="method" value="EM"/>
    <property type="resolution" value="3.00 A"/>
    <property type="chains" value="E=1-348"/>
</dbReference>
<dbReference type="PDB" id="8QU1">
    <property type="method" value="EM"/>
    <property type="resolution" value="2.74 A"/>
    <property type="chains" value="E=1-348"/>
</dbReference>
<dbReference type="PDB" id="8QU5">
    <property type="method" value="EM"/>
    <property type="resolution" value="2.42 A"/>
    <property type="chains" value="E=1-348"/>
</dbReference>
<dbReference type="PDB" id="8RRI">
    <property type="method" value="EM"/>
    <property type="resolution" value="2.40 A"/>
    <property type="chains" value="E=1-348"/>
</dbReference>
<dbReference type="PDB" id="8XT0">
    <property type="method" value="EM"/>
    <property type="resolution" value="3.20 A"/>
    <property type="chains" value="LC=1-348"/>
</dbReference>
<dbReference type="PDB" id="8XT1">
    <property type="method" value="EM"/>
    <property type="resolution" value="3.10 A"/>
    <property type="chains" value="LC=1-348"/>
</dbReference>
<dbReference type="PDB" id="8XT2">
    <property type="method" value="EM"/>
    <property type="resolution" value="3.30 A"/>
    <property type="chains" value="LC=1-348"/>
</dbReference>
<dbReference type="PDB" id="8XT3">
    <property type="method" value="EM"/>
    <property type="resolution" value="3.10 A"/>
    <property type="chains" value="LC=1-348"/>
</dbReference>
<dbReference type="PDBsum" id="3J7Y"/>
<dbReference type="PDBsum" id="3J9M"/>
<dbReference type="PDBsum" id="5OOL"/>
<dbReference type="PDBsum" id="5OOM"/>
<dbReference type="PDBsum" id="6I9R"/>
<dbReference type="PDBsum" id="6NU2"/>
<dbReference type="PDBsum" id="6NU3"/>
<dbReference type="PDBsum" id="6VLZ"/>
<dbReference type="PDBsum" id="6VMI"/>
<dbReference type="PDBsum" id="6ZM5"/>
<dbReference type="PDBsum" id="6ZM6"/>
<dbReference type="PDBsum" id="6ZS9"/>
<dbReference type="PDBsum" id="6ZSA"/>
<dbReference type="PDBsum" id="6ZSB"/>
<dbReference type="PDBsum" id="6ZSC"/>
<dbReference type="PDBsum" id="6ZSD"/>
<dbReference type="PDBsum" id="6ZSE"/>
<dbReference type="PDBsum" id="6ZSG"/>
<dbReference type="PDBsum" id="7A5F"/>
<dbReference type="PDBsum" id="7A5G"/>
<dbReference type="PDBsum" id="7A5H"/>
<dbReference type="PDBsum" id="7A5I"/>
<dbReference type="PDBsum" id="7A5J"/>
<dbReference type="PDBsum" id="7A5K"/>
<dbReference type="PDBsum" id="7L08"/>
<dbReference type="PDBsum" id="7L20"/>
<dbReference type="PDBsum" id="7O9K"/>
<dbReference type="PDBsum" id="7O9M"/>
<dbReference type="PDBsum" id="7ODR"/>
<dbReference type="PDBsum" id="7ODS"/>
<dbReference type="PDBsum" id="7ODT"/>
<dbReference type="PDBsum" id="7OF0"/>
<dbReference type="PDBsum" id="7OF2"/>
<dbReference type="PDBsum" id="7OF3"/>
<dbReference type="PDBsum" id="7OF4"/>
<dbReference type="PDBsum" id="7OF5"/>
<dbReference type="PDBsum" id="7OF6"/>
<dbReference type="PDBsum" id="7OF7"/>
<dbReference type="PDBsum" id="7OG4"/>
<dbReference type="PDBsum" id="7OI6"/>
<dbReference type="PDBsum" id="7OI7"/>
<dbReference type="PDBsum" id="7OI8"/>
<dbReference type="PDBsum" id="7OI9"/>
<dbReference type="PDBsum" id="7OIA"/>
<dbReference type="PDBsum" id="7OIB"/>
<dbReference type="PDBsum" id="7OIC"/>
<dbReference type="PDBsum" id="7OID"/>
<dbReference type="PDBsum" id="7OIE"/>
<dbReference type="PDBsum" id="7PD3"/>
<dbReference type="PDBsum" id="7PO4"/>
<dbReference type="PDBsum" id="7QH6"/>
<dbReference type="PDBsum" id="7QH7"/>
<dbReference type="PDBsum" id="7QI4"/>
<dbReference type="PDBsum" id="7QI5"/>
<dbReference type="PDBsum" id="7QI6"/>
<dbReference type="PDBsum" id="8ANY"/>
<dbReference type="PDBsum" id="8K2A"/>
<dbReference type="PDBsum" id="8K2B"/>
<dbReference type="PDBsum" id="8OIR"/>
<dbReference type="PDBsum" id="8OIT"/>
<dbReference type="PDBsum" id="8PK0"/>
<dbReference type="PDBsum" id="8QSJ"/>
<dbReference type="PDBsum" id="8QU1"/>
<dbReference type="PDBsum" id="8QU5"/>
<dbReference type="PDBsum" id="8RRI"/>
<dbReference type="PDBsum" id="8XT0"/>
<dbReference type="PDBsum" id="8XT1"/>
<dbReference type="PDBsum" id="8XT2"/>
<dbReference type="PDBsum" id="8XT3"/>
<dbReference type="EMDB" id="EMD-0514"/>
<dbReference type="EMDB" id="EMD-0515"/>
<dbReference type="EMDB" id="EMD-11278"/>
<dbReference type="EMDB" id="EMD-11279"/>
<dbReference type="EMDB" id="EMD-11390"/>
<dbReference type="EMDB" id="EMD-11391"/>
<dbReference type="EMDB" id="EMD-11392"/>
<dbReference type="EMDB" id="EMD-11393"/>
<dbReference type="EMDB" id="EMD-11394"/>
<dbReference type="EMDB" id="EMD-11395"/>
<dbReference type="EMDB" id="EMD-11397"/>
<dbReference type="EMDB" id="EMD-11641"/>
<dbReference type="EMDB" id="EMD-11642"/>
<dbReference type="EMDB" id="EMD-11643"/>
<dbReference type="EMDB" id="EMD-11644"/>
<dbReference type="EMDB" id="EMD-11645"/>
<dbReference type="EMDB" id="EMD-11646"/>
<dbReference type="EMDB" id="EMD-12763"/>
<dbReference type="EMDB" id="EMD-12764"/>
<dbReference type="EMDB" id="EMD-12845"/>
<dbReference type="EMDB" id="EMD-12846"/>
<dbReference type="EMDB" id="EMD-12847"/>
<dbReference type="EMDB" id="EMD-12865"/>
<dbReference type="EMDB" id="EMD-12867"/>
<dbReference type="EMDB" id="EMD-12868"/>
<dbReference type="EMDB" id="EMD-12869"/>
<dbReference type="EMDB" id="EMD-12870"/>
<dbReference type="EMDB" id="EMD-12871"/>
<dbReference type="EMDB" id="EMD-12872"/>
<dbReference type="EMDB" id="EMD-12877"/>
<dbReference type="EMDB" id="EMD-12919"/>
<dbReference type="EMDB" id="EMD-12920"/>
<dbReference type="EMDB" id="EMD-12921"/>
<dbReference type="EMDB" id="EMD-12922"/>
<dbReference type="EMDB" id="EMD-12923"/>
<dbReference type="EMDB" id="EMD-12924"/>
<dbReference type="EMDB" id="EMD-12925"/>
<dbReference type="EMDB" id="EMD-12926"/>
<dbReference type="EMDB" id="EMD-12927"/>
<dbReference type="EMDB" id="EMD-13329"/>
<dbReference type="EMDB" id="EMD-13562"/>
<dbReference type="EMDB" id="EMD-13965"/>
<dbReference type="EMDB" id="EMD-13967"/>
<dbReference type="EMDB" id="EMD-13980"/>
<dbReference type="EMDB" id="EMD-13981"/>
<dbReference type="EMDB" id="EMD-13982"/>
<dbReference type="EMDB" id="EMD-15544"/>
<dbReference type="EMDB" id="EMD-16897"/>
<dbReference type="EMDB" id="EMD-16899"/>
<dbReference type="EMDB" id="EMD-17719"/>
<dbReference type="EMDB" id="EMD-19460"/>
<dbReference type="EMDB" id="EMD-21233"/>
<dbReference type="EMDB" id="EMD-21242"/>
<dbReference type="EMDB" id="EMD-23096"/>
<dbReference type="EMDB" id="EMD-23121"/>
<dbReference type="EMDB" id="EMD-36836"/>
<dbReference type="EMDB" id="EMD-36837"/>
<dbReference type="EMDB" id="EMD-3842"/>
<dbReference type="EMDB" id="EMD-3843"/>
<dbReference type="EMDB" id="EMD-38632"/>
<dbReference type="EMDB" id="EMD-38633"/>
<dbReference type="EMDB" id="EMD-38634"/>
<dbReference type="EMDB" id="EMD-38635"/>
<dbReference type="EMDB" id="EMD-4434"/>
<dbReference type="SMR" id="P09001"/>
<dbReference type="BioGRID" id="116390">
    <property type="interactions" value="196"/>
</dbReference>
<dbReference type="ComplexPortal" id="CPX-5226">
    <property type="entry name" value="39S mitochondrial large ribosomal subunit"/>
</dbReference>
<dbReference type="CORUM" id="P09001"/>
<dbReference type="FunCoup" id="P09001">
    <property type="interactions" value="2402"/>
</dbReference>
<dbReference type="IntAct" id="P09001">
    <property type="interactions" value="97"/>
</dbReference>
<dbReference type="MINT" id="P09001"/>
<dbReference type="STRING" id="9606.ENSP00000264995"/>
<dbReference type="GlyGen" id="P09001">
    <property type="glycosylation" value="1 site, 1 O-linked glycan (1 site)"/>
</dbReference>
<dbReference type="iPTMnet" id="P09001"/>
<dbReference type="PhosphoSitePlus" id="P09001"/>
<dbReference type="SwissPalm" id="P09001"/>
<dbReference type="BioMuta" id="MRPL3"/>
<dbReference type="jPOST" id="P09001"/>
<dbReference type="MassIVE" id="P09001"/>
<dbReference type="PaxDb" id="9606-ENSP00000264995"/>
<dbReference type="PeptideAtlas" id="P09001"/>
<dbReference type="ProteomicsDB" id="52183"/>
<dbReference type="Pumba" id="P09001"/>
<dbReference type="Antibodypedia" id="33349">
    <property type="antibodies" value="189 antibodies from 32 providers"/>
</dbReference>
<dbReference type="DNASU" id="11222"/>
<dbReference type="Ensembl" id="ENST00000264995.8">
    <property type="protein sequence ID" value="ENSP00000264995.2"/>
    <property type="gene ID" value="ENSG00000114686.9"/>
</dbReference>
<dbReference type="GeneID" id="11222"/>
<dbReference type="KEGG" id="hsa:11222"/>
<dbReference type="MANE-Select" id="ENST00000264995.8">
    <property type="protein sequence ID" value="ENSP00000264995.2"/>
    <property type="RefSeq nucleotide sequence ID" value="NM_007208.4"/>
    <property type="RefSeq protein sequence ID" value="NP_009139.1"/>
</dbReference>
<dbReference type="UCSC" id="uc003eoh.4">
    <property type="organism name" value="human"/>
</dbReference>
<dbReference type="AGR" id="HGNC:10379"/>
<dbReference type="CTD" id="11222"/>
<dbReference type="DisGeNET" id="11222"/>
<dbReference type="GeneCards" id="MRPL3"/>
<dbReference type="HGNC" id="HGNC:10379">
    <property type="gene designation" value="MRPL3"/>
</dbReference>
<dbReference type="HPA" id="ENSG00000114686">
    <property type="expression patterns" value="Low tissue specificity"/>
</dbReference>
<dbReference type="MalaCards" id="MRPL3"/>
<dbReference type="MIM" id="607118">
    <property type="type" value="gene"/>
</dbReference>
<dbReference type="MIM" id="614582">
    <property type="type" value="phenotype"/>
</dbReference>
<dbReference type="neXtProt" id="NX_P09001"/>
<dbReference type="OpenTargets" id="ENSG00000114686"/>
<dbReference type="Orphanet" id="319509">
    <property type="disease" value="Combined oxidative phosphorylation defect type 9"/>
</dbReference>
<dbReference type="PharmGKB" id="PA30960"/>
<dbReference type="VEuPathDB" id="HostDB:ENSG00000114686"/>
<dbReference type="eggNOG" id="KOG3141">
    <property type="taxonomic scope" value="Eukaryota"/>
</dbReference>
<dbReference type="GeneTree" id="ENSGT00390000011422"/>
<dbReference type="HOGENOM" id="CLU_044142_1_1_1"/>
<dbReference type="InParanoid" id="P09001"/>
<dbReference type="OMA" id="IGIYPMW"/>
<dbReference type="OrthoDB" id="274683at2759"/>
<dbReference type="PAN-GO" id="P09001">
    <property type="GO annotations" value="2 GO annotations based on evolutionary models"/>
</dbReference>
<dbReference type="PhylomeDB" id="P09001"/>
<dbReference type="TreeFam" id="TF105634"/>
<dbReference type="PathwayCommons" id="P09001"/>
<dbReference type="Reactome" id="R-HSA-5368286">
    <property type="pathway name" value="Mitochondrial translation initiation"/>
</dbReference>
<dbReference type="Reactome" id="R-HSA-5389840">
    <property type="pathway name" value="Mitochondrial translation elongation"/>
</dbReference>
<dbReference type="Reactome" id="R-HSA-5419276">
    <property type="pathway name" value="Mitochondrial translation termination"/>
</dbReference>
<dbReference type="SignaLink" id="P09001"/>
<dbReference type="SIGNOR" id="P09001"/>
<dbReference type="BioGRID-ORCS" id="11222">
    <property type="hits" value="320 hits in 1164 CRISPR screens"/>
</dbReference>
<dbReference type="CD-CODE" id="91857CE7">
    <property type="entry name" value="Nucleolus"/>
</dbReference>
<dbReference type="ChiTaRS" id="MRPL3">
    <property type="organism name" value="human"/>
</dbReference>
<dbReference type="GeneWiki" id="MRPL3"/>
<dbReference type="GenomeRNAi" id="11222"/>
<dbReference type="Pharos" id="P09001">
    <property type="development level" value="Tbio"/>
</dbReference>
<dbReference type="PRO" id="PR:P09001"/>
<dbReference type="Proteomes" id="UP000005640">
    <property type="component" value="Chromosome 3"/>
</dbReference>
<dbReference type="RNAct" id="P09001">
    <property type="molecule type" value="protein"/>
</dbReference>
<dbReference type="Bgee" id="ENSG00000114686">
    <property type="expression patterns" value="Expressed in secondary oocyte and 214 other cell types or tissues"/>
</dbReference>
<dbReference type="ExpressionAtlas" id="P09001">
    <property type="expression patterns" value="baseline and differential"/>
</dbReference>
<dbReference type="GO" id="GO:0005743">
    <property type="term" value="C:mitochondrial inner membrane"/>
    <property type="evidence" value="ECO:0000304"/>
    <property type="project" value="Reactome"/>
</dbReference>
<dbReference type="GO" id="GO:0005762">
    <property type="term" value="C:mitochondrial large ribosomal subunit"/>
    <property type="evidence" value="ECO:0000314"/>
    <property type="project" value="UniProtKB"/>
</dbReference>
<dbReference type="GO" id="GO:0005739">
    <property type="term" value="C:mitochondrion"/>
    <property type="evidence" value="ECO:0000314"/>
    <property type="project" value="UniProtKB"/>
</dbReference>
<dbReference type="GO" id="GO:0003723">
    <property type="term" value="F:RNA binding"/>
    <property type="evidence" value="ECO:0007005"/>
    <property type="project" value="UniProtKB"/>
</dbReference>
<dbReference type="GO" id="GO:0003735">
    <property type="term" value="F:structural constituent of ribosome"/>
    <property type="evidence" value="ECO:0000318"/>
    <property type="project" value="GO_Central"/>
</dbReference>
<dbReference type="GO" id="GO:0032543">
    <property type="term" value="P:mitochondrial translation"/>
    <property type="evidence" value="ECO:0000303"/>
    <property type="project" value="ComplexPortal"/>
</dbReference>
<dbReference type="GO" id="GO:0006412">
    <property type="term" value="P:translation"/>
    <property type="evidence" value="ECO:0000304"/>
    <property type="project" value="ProtInc"/>
</dbReference>
<dbReference type="FunFam" id="2.40.30.10:FF:000049">
    <property type="entry name" value="39S ribosomal protein L3, mitochondrial"/>
    <property type="match status" value="1"/>
</dbReference>
<dbReference type="FunFam" id="2.40.30.10:FF:000067">
    <property type="entry name" value="39S ribosomal protein L3, mitochondrial"/>
    <property type="match status" value="1"/>
</dbReference>
<dbReference type="Gene3D" id="2.40.30.10">
    <property type="entry name" value="Translation factors"/>
    <property type="match status" value="2"/>
</dbReference>
<dbReference type="InterPro" id="IPR000597">
    <property type="entry name" value="Ribosomal_uL3"/>
</dbReference>
<dbReference type="InterPro" id="IPR019927">
    <property type="entry name" value="Ribosomal_uL3_bac/org-type"/>
</dbReference>
<dbReference type="InterPro" id="IPR019926">
    <property type="entry name" value="Ribosomal_uL3_CS"/>
</dbReference>
<dbReference type="InterPro" id="IPR009000">
    <property type="entry name" value="Transl_B-barrel_sf"/>
</dbReference>
<dbReference type="NCBIfam" id="TIGR03625">
    <property type="entry name" value="L3_bact"/>
    <property type="match status" value="1"/>
</dbReference>
<dbReference type="PANTHER" id="PTHR11229">
    <property type="entry name" value="50S RIBOSOMAL PROTEIN L3"/>
    <property type="match status" value="1"/>
</dbReference>
<dbReference type="PANTHER" id="PTHR11229:SF13">
    <property type="entry name" value="LARGE RIBOSOMAL SUBUNIT PROTEIN UL3M"/>
    <property type="match status" value="1"/>
</dbReference>
<dbReference type="Pfam" id="PF00297">
    <property type="entry name" value="Ribosomal_L3"/>
    <property type="match status" value="2"/>
</dbReference>
<dbReference type="SUPFAM" id="SSF50447">
    <property type="entry name" value="Translation proteins"/>
    <property type="match status" value="1"/>
</dbReference>
<dbReference type="PROSITE" id="PS00474">
    <property type="entry name" value="RIBOSOMAL_L3"/>
    <property type="match status" value="1"/>
</dbReference>
<name>RM03_HUMAN</name>
<sequence length="348" mass="38633">MPGWRLLTQVGAQVLGRLGDGLGAALGPGNRTHIWLFVRGLHGKSGTWWDEHLSEENVPFIKQLVSDEDKAQLASKLCPLKDEPWPIHPWEPGSFRVGLIALKLGMMPLWTKDGQKHVVTLLQVQDCHVLKYTSKENCNGKMATLSVGGKTVSRFRKATSILEFYRELGLPPKQTVKIFNITDNAAIKPGTPLYAAHFRPGQYVDVTAKTIGKGFQGVMKRWGFKGQPATHGQTKTHRRPGAVATGDIGRVWPGTKMPGKMGNIYRTEYGLKVWRINTKHNIIYVNGSVPGHKNCLVKVKDSKLPAYKDLGKNLPFPTYFPDGDEEELPEDLYDENVCQPGAPSITFA</sequence>
<keyword id="KW-0002">3D-structure</keyword>
<keyword id="KW-0225">Disease variant</keyword>
<keyword id="KW-0496">Mitochondrion</keyword>
<keyword id="KW-1274">Primary mitochondrial disease</keyword>
<keyword id="KW-1267">Proteomics identification</keyword>
<keyword id="KW-1185">Reference proteome</keyword>
<keyword id="KW-0687">Ribonucleoprotein</keyword>
<keyword id="KW-0689">Ribosomal protein</keyword>
<keyword id="KW-0809">Transit peptide</keyword>
<proteinExistence type="evidence at protein level"/>